<organism>
    <name type="scientific">Photorhabdus luminescens</name>
    <name type="common">Xenorhabdus luminescens</name>
    <dbReference type="NCBI Taxonomy" id="29488"/>
    <lineage>
        <taxon>Bacteria</taxon>
        <taxon>Pseudomonadati</taxon>
        <taxon>Pseudomonadota</taxon>
        <taxon>Gammaproteobacteria</taxon>
        <taxon>Enterobacterales</taxon>
        <taxon>Morganellaceae</taxon>
        <taxon>Photorhabdus</taxon>
    </lineage>
</organism>
<gene>
    <name type="primary">luxE</name>
</gene>
<protein>
    <recommendedName>
        <fullName>Long-chain-fatty-acid--luciferin-component ligase</fullName>
        <ecNumber>6.2.1.19</ecNumber>
    </recommendedName>
    <alternativeName>
        <fullName>Acyl-protein synthetase</fullName>
    </alternativeName>
</protein>
<sequence>MTSYVDKQEITASSEIDDLIFSSDPLVCAYDEQEKIRKKLVLDAFRHHYKHCQEYRHYCQAHKVDDNITEIDDIPVFPTSVFKFTRLLTSNENEIESWFTSSGTNGLKSQVPRDRL</sequence>
<name>LUXE_PHOLU</name>
<reference key="1">
    <citation type="journal article" date="1991" name="J. Bacteriol.">
        <title>Cloning and nucleotide sequences of lux genes and characterization of luciferase of Xenorhabdus luminescens from a human wound.</title>
        <authorList>
            <person name="Xi L."/>
            <person name="Cho K.W."/>
            <person name="Tu S.C."/>
        </authorList>
    </citation>
    <scope>NUCLEOTIDE SEQUENCE [GENOMIC DNA]</scope>
    <source>
        <strain>Hw</strain>
    </source>
</reference>
<reference key="2">
    <citation type="journal article" date="1990" name="Biochem. Biophys. Res. Commun.">
        <title>The nucleotide sequence of the luxA and luxB genes of Xenorhabdus luminescens HM and a comparison of the amino acid sequences of luciferases from four species of bioluminescent bacteria.</title>
        <authorList>
            <person name="Johnston T.C."/>
            <person name="Rucker E.B."/>
            <person name="Cochrum L."/>
            <person name="Hruska K.S."/>
            <person name="Vandegrift V."/>
        </authorList>
    </citation>
    <scope>NUCLEOTIDE SEQUENCE [GENOMIC DNA] OF 1-37</scope>
    <source>
        <strain>Hm</strain>
    </source>
</reference>
<reference key="3">
    <citation type="journal article" date="1990" name="J. Biol. Chem.">
        <title>Nucleotide sequence, expression, and properties of luciferase coded by lux genes from a terrestrial bacterium.</title>
        <authorList>
            <person name="Szittner R."/>
            <person name="Meighen E."/>
        </authorList>
    </citation>
    <scope>NUCLEOTIDE SEQUENCE [GENOMIC DNA] OF 1-4</scope>
    <source>
        <strain>ATCC 29999 / DSM 3368 / BCRC 14801 / CCM 7077 / CIP 106429 / NCIMB 12670 / Hb</strain>
    </source>
</reference>
<dbReference type="EC" id="6.2.1.19"/>
<dbReference type="EMBL" id="M62917">
    <property type="protein sequence ID" value="AAA63567.1"/>
    <property type="molecule type" value="Genomic_DNA"/>
</dbReference>
<dbReference type="EMBL" id="M57416">
    <property type="status" value="NOT_ANNOTATED_CDS"/>
    <property type="molecule type" value="Genomic_DNA"/>
</dbReference>
<dbReference type="EMBL" id="M55977">
    <property type="protein sequence ID" value="AAA27628.1"/>
    <property type="molecule type" value="Genomic_DNA"/>
</dbReference>
<dbReference type="SMR" id="P19842"/>
<dbReference type="STRING" id="29488.KS18_21630"/>
<dbReference type="UniPathway" id="UPA00569"/>
<dbReference type="GO" id="GO:0005524">
    <property type="term" value="F:ATP binding"/>
    <property type="evidence" value="ECO:0007669"/>
    <property type="project" value="UniProtKB-KW"/>
</dbReference>
<dbReference type="GO" id="GO:0047474">
    <property type="term" value="F:long-chain fatty acid--protein ligase activity"/>
    <property type="evidence" value="ECO:0007669"/>
    <property type="project" value="UniProtKB-EC"/>
</dbReference>
<dbReference type="GO" id="GO:0008218">
    <property type="term" value="P:bioluminescence"/>
    <property type="evidence" value="ECO:0007669"/>
    <property type="project" value="UniProtKB-KW"/>
</dbReference>
<dbReference type="InterPro" id="IPR007534">
    <property type="entry name" value="LuxE"/>
</dbReference>
<dbReference type="Pfam" id="PF04443">
    <property type="entry name" value="LuxE"/>
    <property type="match status" value="1"/>
</dbReference>
<keyword id="KW-0067">ATP-binding</keyword>
<keyword id="KW-0436">Ligase</keyword>
<keyword id="KW-0455">Luminescence</keyword>
<keyword id="KW-0547">Nucleotide-binding</keyword>
<accession>P19842</accession>
<feature type="chain" id="PRO_0000208064" description="Long-chain-fatty-acid--luciferin-component ligase">
    <location>
        <begin position="1"/>
        <end position="116" status="greater than"/>
    </location>
</feature>
<feature type="non-terminal residue">
    <location>
        <position position="116"/>
    </location>
</feature>
<comment type="function">
    <text>Acyl-protein synthetase activates tetradecanoic acid. It is a component of the fatty acid reductase complex responsible for converting tetradecanoic acid to the aldehyde which serves as substrate in the luciferase-catalyzed reaction.</text>
</comment>
<comment type="catalytic activity">
    <reaction>
        <text>a long-chain fatty acid + L-cysteinyl-[protein] + ATP = an S-(long-chain fatty acyl)-L-cysteinyl-[protein] + AMP + diphosphate</text>
        <dbReference type="Rhea" id="RHEA:20101"/>
        <dbReference type="Rhea" id="RHEA-COMP:10131"/>
        <dbReference type="Rhea" id="RHEA-COMP:12762"/>
        <dbReference type="ChEBI" id="CHEBI:29950"/>
        <dbReference type="ChEBI" id="CHEBI:30616"/>
        <dbReference type="ChEBI" id="CHEBI:33019"/>
        <dbReference type="ChEBI" id="CHEBI:57560"/>
        <dbReference type="ChEBI" id="CHEBI:133479"/>
        <dbReference type="ChEBI" id="CHEBI:456215"/>
        <dbReference type="EC" id="6.2.1.19"/>
    </reaction>
</comment>
<comment type="pathway">
    <text>Lipid metabolism; fatty acid reduction for biolumincescence.</text>
</comment>
<comment type="similarity">
    <text evidence="1">Belongs to the LuxE family.</text>
</comment>
<proteinExistence type="inferred from homology"/>
<evidence type="ECO:0000305" key="1"/>